<keyword id="KW-0342">GTP-binding</keyword>
<keyword id="KW-0547">Nucleotide-binding</keyword>
<keyword id="KW-0539">Nucleus</keyword>
<keyword id="KW-0653">Protein transport</keyword>
<keyword id="KW-1185">Reference proteome</keyword>
<keyword id="KW-0813">Transport</keyword>
<comment type="function">
    <text evidence="1">GTP-binding protein involved in nucleocytoplasmic transport. Required for the import of protein into the nucleus and also for RNA export. Involved in chromatin condensation and control of cell cycle (By similarity).</text>
</comment>
<comment type="subunit">
    <text evidence="2">Found in a nuclear export complex with RanGTP, exportin and pre-miRNA (By similarity).</text>
</comment>
<comment type="subcellular location">
    <subcellularLocation>
        <location evidence="1">Nucleus</location>
    </subcellularLocation>
</comment>
<comment type="similarity">
    <text evidence="3 4">Belongs to the small GTPase superfamily. Ran family.</text>
</comment>
<accession>A2Y7R5</accession>
<feature type="chain" id="PRO_0000347211" description="GTP-binding nuclear protein Ran-2">
    <location>
        <begin position="1"/>
        <end position="221"/>
    </location>
</feature>
<feature type="domain" description="Small GTPase Ran-type" evidence="3">
    <location>
        <begin position="10"/>
        <end position="174"/>
    </location>
</feature>
<feature type="region of interest" description="Switch-I" evidence="3">
    <location>
        <begin position="40"/>
        <end position="48"/>
    </location>
</feature>
<feature type="region of interest" description="Switch-II" evidence="3">
    <location>
        <begin position="71"/>
        <end position="87"/>
    </location>
</feature>
<feature type="binding site" evidence="2">
    <location>
        <begin position="21"/>
        <end position="28"/>
    </location>
    <ligand>
        <name>GTP</name>
        <dbReference type="ChEBI" id="CHEBI:37565"/>
    </ligand>
</feature>
<feature type="binding site" evidence="2">
    <location>
        <position position="71"/>
    </location>
    <ligand>
        <name>GTP</name>
        <dbReference type="ChEBI" id="CHEBI:37565"/>
    </ligand>
</feature>
<feature type="binding site" evidence="2">
    <location>
        <begin position="125"/>
        <end position="128"/>
    </location>
    <ligand>
        <name>GTP</name>
        <dbReference type="ChEBI" id="CHEBI:37565"/>
    </ligand>
</feature>
<feature type="binding site" evidence="2">
    <location>
        <begin position="153"/>
        <end position="155"/>
    </location>
    <ligand>
        <name>GTP</name>
        <dbReference type="ChEBI" id="CHEBI:37565"/>
    </ligand>
</feature>
<gene>
    <name type="primary">RAN2</name>
    <name type="ORF">OsI_020358</name>
</gene>
<dbReference type="EMBL" id="CM000130">
    <property type="protein sequence ID" value="EAY99125.1"/>
    <property type="molecule type" value="Genomic_DNA"/>
</dbReference>
<dbReference type="EMBL" id="CT844161">
    <property type="status" value="NOT_ANNOTATED_CDS"/>
    <property type="molecule type" value="mRNA"/>
</dbReference>
<dbReference type="SMR" id="A2Y7R5"/>
<dbReference type="STRING" id="39946.A2Y7R5"/>
<dbReference type="EnsemblPlants" id="BGIOSGA017514-TA">
    <property type="protein sequence ID" value="BGIOSGA017514-PA"/>
    <property type="gene ID" value="BGIOSGA017514"/>
</dbReference>
<dbReference type="EnsemblPlants" id="OsGoSa_05g0027580.01">
    <property type="protein sequence ID" value="OsGoSa_05g0027580.01"/>
    <property type="gene ID" value="OsGoSa_05g0027580"/>
</dbReference>
<dbReference type="EnsemblPlants" id="OsKYG_05g0027350.01">
    <property type="protein sequence ID" value="OsKYG_05g0027350.01"/>
    <property type="gene ID" value="OsKYG_05g0027350"/>
</dbReference>
<dbReference type="EnsemblPlants" id="OsLiXu_05g0027590.01">
    <property type="protein sequence ID" value="OsLiXu_05g0027590.01"/>
    <property type="gene ID" value="OsLiXu_05g0027590"/>
</dbReference>
<dbReference type="Gramene" id="BGIOSGA017514-TA">
    <property type="protein sequence ID" value="BGIOSGA017514-PA"/>
    <property type="gene ID" value="BGIOSGA017514"/>
</dbReference>
<dbReference type="Gramene" id="OsGoSa_05g0027580.01">
    <property type="protein sequence ID" value="OsGoSa_05g0027580.01"/>
    <property type="gene ID" value="OsGoSa_05g0027580"/>
</dbReference>
<dbReference type="Gramene" id="OsKYG_05g0027350.01">
    <property type="protein sequence ID" value="OsKYG_05g0027350.01"/>
    <property type="gene ID" value="OsKYG_05g0027350"/>
</dbReference>
<dbReference type="Gramene" id="OsLiXu_05g0027590.01">
    <property type="protein sequence ID" value="OsLiXu_05g0027590.01"/>
    <property type="gene ID" value="OsLiXu_05g0027590"/>
</dbReference>
<dbReference type="HOGENOM" id="CLU_041217_13_0_1"/>
<dbReference type="OMA" id="FFWLARK"/>
<dbReference type="OrthoDB" id="2012850at2759"/>
<dbReference type="Proteomes" id="UP000007015">
    <property type="component" value="Chromosome 5"/>
</dbReference>
<dbReference type="GO" id="GO:0005737">
    <property type="term" value="C:cytoplasm"/>
    <property type="evidence" value="ECO:0007669"/>
    <property type="project" value="TreeGrafter"/>
</dbReference>
<dbReference type="GO" id="GO:0005634">
    <property type="term" value="C:nucleus"/>
    <property type="evidence" value="ECO:0007669"/>
    <property type="project" value="UniProtKB-SubCell"/>
</dbReference>
<dbReference type="GO" id="GO:0005525">
    <property type="term" value="F:GTP binding"/>
    <property type="evidence" value="ECO:0007669"/>
    <property type="project" value="UniProtKB-KW"/>
</dbReference>
<dbReference type="GO" id="GO:0003924">
    <property type="term" value="F:GTPase activity"/>
    <property type="evidence" value="ECO:0007669"/>
    <property type="project" value="InterPro"/>
</dbReference>
<dbReference type="GO" id="GO:0006606">
    <property type="term" value="P:protein import into nucleus"/>
    <property type="evidence" value="ECO:0007669"/>
    <property type="project" value="TreeGrafter"/>
</dbReference>
<dbReference type="GO" id="GO:0000054">
    <property type="term" value="P:ribosomal subunit export from nucleus"/>
    <property type="evidence" value="ECO:0007669"/>
    <property type="project" value="TreeGrafter"/>
</dbReference>
<dbReference type="CDD" id="cd00877">
    <property type="entry name" value="Ran"/>
    <property type="match status" value="1"/>
</dbReference>
<dbReference type="FunFam" id="3.40.50.300:FF:000369">
    <property type="entry name" value="GTP-binding nuclear protein"/>
    <property type="match status" value="1"/>
</dbReference>
<dbReference type="Gene3D" id="3.40.50.300">
    <property type="entry name" value="P-loop containing nucleotide triphosphate hydrolases"/>
    <property type="match status" value="1"/>
</dbReference>
<dbReference type="InterPro" id="IPR027417">
    <property type="entry name" value="P-loop_NTPase"/>
</dbReference>
<dbReference type="InterPro" id="IPR002041">
    <property type="entry name" value="Ran_GTPase"/>
</dbReference>
<dbReference type="InterPro" id="IPR005225">
    <property type="entry name" value="Small_GTP-bd"/>
</dbReference>
<dbReference type="InterPro" id="IPR001806">
    <property type="entry name" value="Small_GTPase"/>
</dbReference>
<dbReference type="NCBIfam" id="TIGR00231">
    <property type="entry name" value="small_GTP"/>
    <property type="match status" value="1"/>
</dbReference>
<dbReference type="PANTHER" id="PTHR24071:SF20">
    <property type="entry name" value="GTP-BINDING NUCLEAR PROTEIN RAN-2"/>
    <property type="match status" value="1"/>
</dbReference>
<dbReference type="PANTHER" id="PTHR24071">
    <property type="entry name" value="RAN GTPASE"/>
    <property type="match status" value="1"/>
</dbReference>
<dbReference type="Pfam" id="PF00071">
    <property type="entry name" value="Ras"/>
    <property type="match status" value="1"/>
</dbReference>
<dbReference type="PRINTS" id="PR00627">
    <property type="entry name" value="GTPRANTC4"/>
</dbReference>
<dbReference type="SMART" id="SM00175">
    <property type="entry name" value="RAB"/>
    <property type="match status" value="1"/>
</dbReference>
<dbReference type="SMART" id="SM00176">
    <property type="entry name" value="RAN"/>
    <property type="match status" value="1"/>
</dbReference>
<dbReference type="SMART" id="SM00173">
    <property type="entry name" value="RAS"/>
    <property type="match status" value="1"/>
</dbReference>
<dbReference type="SMART" id="SM00174">
    <property type="entry name" value="RHO"/>
    <property type="match status" value="1"/>
</dbReference>
<dbReference type="SUPFAM" id="SSF52540">
    <property type="entry name" value="P-loop containing nucleoside triphosphate hydrolases"/>
    <property type="match status" value="1"/>
</dbReference>
<dbReference type="PROSITE" id="PS51418">
    <property type="entry name" value="RAN"/>
    <property type="match status" value="1"/>
</dbReference>
<protein>
    <recommendedName>
        <fullName>GTP-binding nuclear protein Ran-2</fullName>
        <shortName>OsRan2</shortName>
    </recommendedName>
    <alternativeName>
        <fullName>Ras-related nuclear protein 2</fullName>
    </alternativeName>
</protein>
<evidence type="ECO:0000250" key="1"/>
<evidence type="ECO:0000250" key="2">
    <source>
        <dbReference type="UniProtKB" id="P62825"/>
    </source>
</evidence>
<evidence type="ECO:0000255" key="3">
    <source>
        <dbReference type="PROSITE-ProRule" id="PRU00752"/>
    </source>
</evidence>
<evidence type="ECO:0000305" key="4"/>
<name>RAN2_ORYSI</name>
<reference key="1">
    <citation type="journal article" date="2005" name="PLoS Biol.">
        <title>The genomes of Oryza sativa: a history of duplications.</title>
        <authorList>
            <person name="Yu J."/>
            <person name="Wang J."/>
            <person name="Lin W."/>
            <person name="Li S."/>
            <person name="Li H."/>
            <person name="Zhou J."/>
            <person name="Ni P."/>
            <person name="Dong W."/>
            <person name="Hu S."/>
            <person name="Zeng C."/>
            <person name="Zhang J."/>
            <person name="Zhang Y."/>
            <person name="Li R."/>
            <person name="Xu Z."/>
            <person name="Li S."/>
            <person name="Li X."/>
            <person name="Zheng H."/>
            <person name="Cong L."/>
            <person name="Lin L."/>
            <person name="Yin J."/>
            <person name="Geng J."/>
            <person name="Li G."/>
            <person name="Shi J."/>
            <person name="Liu J."/>
            <person name="Lv H."/>
            <person name="Li J."/>
            <person name="Wang J."/>
            <person name="Deng Y."/>
            <person name="Ran L."/>
            <person name="Shi X."/>
            <person name="Wang X."/>
            <person name="Wu Q."/>
            <person name="Li C."/>
            <person name="Ren X."/>
            <person name="Wang J."/>
            <person name="Wang X."/>
            <person name="Li D."/>
            <person name="Liu D."/>
            <person name="Zhang X."/>
            <person name="Ji Z."/>
            <person name="Zhao W."/>
            <person name="Sun Y."/>
            <person name="Zhang Z."/>
            <person name="Bao J."/>
            <person name="Han Y."/>
            <person name="Dong L."/>
            <person name="Ji J."/>
            <person name="Chen P."/>
            <person name="Wu S."/>
            <person name="Liu J."/>
            <person name="Xiao Y."/>
            <person name="Bu D."/>
            <person name="Tan J."/>
            <person name="Yang L."/>
            <person name="Ye C."/>
            <person name="Zhang J."/>
            <person name="Xu J."/>
            <person name="Zhou Y."/>
            <person name="Yu Y."/>
            <person name="Zhang B."/>
            <person name="Zhuang S."/>
            <person name="Wei H."/>
            <person name="Liu B."/>
            <person name="Lei M."/>
            <person name="Yu H."/>
            <person name="Li Y."/>
            <person name="Xu H."/>
            <person name="Wei S."/>
            <person name="He X."/>
            <person name="Fang L."/>
            <person name="Zhang Z."/>
            <person name="Zhang Y."/>
            <person name="Huang X."/>
            <person name="Su Z."/>
            <person name="Tong W."/>
            <person name="Li J."/>
            <person name="Tong Z."/>
            <person name="Li S."/>
            <person name="Ye J."/>
            <person name="Wang L."/>
            <person name="Fang L."/>
            <person name="Lei T."/>
            <person name="Chen C.-S."/>
            <person name="Chen H.-C."/>
            <person name="Xu Z."/>
            <person name="Li H."/>
            <person name="Huang H."/>
            <person name="Zhang F."/>
            <person name="Xu H."/>
            <person name="Li N."/>
            <person name="Zhao C."/>
            <person name="Li S."/>
            <person name="Dong L."/>
            <person name="Huang Y."/>
            <person name="Li L."/>
            <person name="Xi Y."/>
            <person name="Qi Q."/>
            <person name="Li W."/>
            <person name="Zhang B."/>
            <person name="Hu W."/>
            <person name="Zhang Y."/>
            <person name="Tian X."/>
            <person name="Jiao Y."/>
            <person name="Liang X."/>
            <person name="Jin J."/>
            <person name="Gao L."/>
            <person name="Zheng W."/>
            <person name="Hao B."/>
            <person name="Liu S.-M."/>
            <person name="Wang W."/>
            <person name="Yuan L."/>
            <person name="Cao M."/>
            <person name="McDermott J."/>
            <person name="Samudrala R."/>
            <person name="Wang J."/>
            <person name="Wong G.K.-S."/>
            <person name="Yang H."/>
        </authorList>
    </citation>
    <scope>NUCLEOTIDE SEQUENCE [LARGE SCALE GENOMIC DNA]</scope>
    <source>
        <strain>cv. 93-11</strain>
    </source>
</reference>
<reference key="2">
    <citation type="journal article" date="2007" name="Plant Mol. Biol.">
        <title>A collection of 10,096 indica rice full-length cDNAs reveals highly expressed sequence divergence between Oryza sativa indica and japonica subspecies.</title>
        <authorList>
            <person name="Liu X."/>
            <person name="Lu T."/>
            <person name="Yu S."/>
            <person name="Li Y."/>
            <person name="Huang Y."/>
            <person name="Huang T."/>
            <person name="Zhang L."/>
            <person name="Zhu J."/>
            <person name="Zhao Q."/>
            <person name="Fan D."/>
            <person name="Mu J."/>
            <person name="Shangguan Y."/>
            <person name="Feng Q."/>
            <person name="Guan J."/>
            <person name="Ying K."/>
            <person name="Zhang Y."/>
            <person name="Lin Z."/>
            <person name="Sun Z."/>
            <person name="Qian Q."/>
            <person name="Lu Y."/>
            <person name="Han B."/>
        </authorList>
    </citation>
    <scope>NUCLEOTIDE SEQUENCE [LARGE SCALE MRNA]</scope>
    <source>
        <strain>cv. Guang-Lu-Ai No.4</strain>
    </source>
</reference>
<sequence length="221" mass="25039">MALPNQGTVDYPSFKLVIVGDGGTGKTTFVKRHLTGEFEKKYEPTIGVEVHPLDFTTNCGKIRFYCWDTAGQEKFGGLRDGYYIHGQCAIIMFDVTSRLTYKNVPTWHRDLCRVCENIPIVLCGNKVDVKNRQVKAKQVTFHRKKNLQYYEISAKSNYNFEKPFLYLARKLAGDPNLHFVEAVALKPPEVPIDLAMQQQHEAELAAAAAQPLPDDDDDLIE</sequence>
<proteinExistence type="evidence at transcript level"/>
<organism>
    <name type="scientific">Oryza sativa subsp. indica</name>
    <name type="common">Rice</name>
    <dbReference type="NCBI Taxonomy" id="39946"/>
    <lineage>
        <taxon>Eukaryota</taxon>
        <taxon>Viridiplantae</taxon>
        <taxon>Streptophyta</taxon>
        <taxon>Embryophyta</taxon>
        <taxon>Tracheophyta</taxon>
        <taxon>Spermatophyta</taxon>
        <taxon>Magnoliopsida</taxon>
        <taxon>Liliopsida</taxon>
        <taxon>Poales</taxon>
        <taxon>Poaceae</taxon>
        <taxon>BOP clade</taxon>
        <taxon>Oryzoideae</taxon>
        <taxon>Oryzeae</taxon>
        <taxon>Oryzinae</taxon>
        <taxon>Oryza</taxon>
        <taxon>Oryza sativa</taxon>
    </lineage>
</organism>